<dbReference type="EMBL" id="AF480443">
    <property type="protein sequence ID" value="AAL79336.1"/>
    <property type="molecule type" value="mRNA"/>
</dbReference>
<dbReference type="EMBL" id="AJ277961">
    <property type="protein sequence ID" value="CAC81912.1"/>
    <property type="molecule type" value="mRNA"/>
</dbReference>
<dbReference type="EMBL" id="AJ300586">
    <property type="protein sequence ID" value="CAC83076.1"/>
    <property type="molecule type" value="mRNA"/>
</dbReference>
<dbReference type="EMBL" id="AJ300587">
    <property type="protein sequence ID" value="CAC83077.1"/>
    <property type="molecule type" value="mRNA"/>
</dbReference>
<dbReference type="EMBL" id="AK313873">
    <property type="protein sequence ID" value="BAG36601.1"/>
    <property type="molecule type" value="mRNA"/>
</dbReference>
<dbReference type="EMBL" id="AC008453">
    <property type="status" value="NOT_ANNOTATED_CDS"/>
    <property type="molecule type" value="Genomic_DNA"/>
</dbReference>
<dbReference type="EMBL" id="CH471062">
    <property type="protein sequence ID" value="EAW61713.1"/>
    <property type="molecule type" value="Genomic_DNA"/>
</dbReference>
<dbReference type="EMBL" id="CH471062">
    <property type="protein sequence ID" value="EAW61714.1"/>
    <property type="molecule type" value="Genomic_DNA"/>
</dbReference>
<dbReference type="EMBL" id="BC069380">
    <property type="protein sequence ID" value="AAH69380.1"/>
    <property type="molecule type" value="mRNA"/>
</dbReference>
<dbReference type="EMBL" id="BC069553">
    <property type="protein sequence ID" value="AAH69553.1"/>
    <property type="molecule type" value="mRNA"/>
</dbReference>
<dbReference type="EMBL" id="BC074870">
    <property type="protein sequence ID" value="AAH74870.1"/>
    <property type="molecule type" value="mRNA"/>
</dbReference>
<dbReference type="EMBL" id="BC074871">
    <property type="protein sequence ID" value="AAH74871.1"/>
    <property type="molecule type" value="mRNA"/>
</dbReference>
<dbReference type="CCDS" id="CCDS4309.1">
    <molecule id="Q8TDC0-1"/>
</dbReference>
<dbReference type="RefSeq" id="NP_001116325.1">
    <molecule id="Q8TDC0-1"/>
    <property type="nucleotide sequence ID" value="NM_001122853.3"/>
</dbReference>
<dbReference type="RefSeq" id="NP_588612.2">
    <molecule id="Q8TDC0-1"/>
    <property type="nucleotide sequence ID" value="NM_133371.5"/>
</dbReference>
<dbReference type="BioGRID" id="124899">
    <property type="interactions" value="68"/>
</dbReference>
<dbReference type="FunCoup" id="Q8TDC0">
    <property type="interactions" value="37"/>
</dbReference>
<dbReference type="IntAct" id="Q8TDC0">
    <property type="interactions" value="62"/>
</dbReference>
<dbReference type="MINT" id="Q8TDC0"/>
<dbReference type="STRING" id="9606.ENSP00000297130"/>
<dbReference type="iPTMnet" id="Q8TDC0"/>
<dbReference type="PhosphoSitePlus" id="Q8TDC0"/>
<dbReference type="BioMuta" id="MYOZ3"/>
<dbReference type="DMDM" id="296439236"/>
<dbReference type="jPOST" id="Q8TDC0"/>
<dbReference type="MassIVE" id="Q8TDC0"/>
<dbReference type="PaxDb" id="9606-ENSP00000297130"/>
<dbReference type="PeptideAtlas" id="Q8TDC0"/>
<dbReference type="ProteomicsDB" id="74261">
    <molecule id="Q8TDC0-1"/>
</dbReference>
<dbReference type="ProteomicsDB" id="74262">
    <molecule id="Q8TDC0-2"/>
</dbReference>
<dbReference type="ProteomicsDB" id="74263">
    <molecule id="Q8TDC0-3"/>
</dbReference>
<dbReference type="Antibodypedia" id="50777">
    <property type="antibodies" value="27 antibodies from 12 providers"/>
</dbReference>
<dbReference type="DNASU" id="91977"/>
<dbReference type="Ensembl" id="ENST00000297130.4">
    <molecule id="Q8TDC0-1"/>
    <property type="protein sequence ID" value="ENSP00000297130.4"/>
    <property type="gene ID" value="ENSG00000164591.14"/>
</dbReference>
<dbReference type="Ensembl" id="ENST00000517768.6">
    <molecule id="Q8TDC0-1"/>
    <property type="protein sequence ID" value="ENSP00000428815.1"/>
    <property type="gene ID" value="ENSG00000164591.14"/>
</dbReference>
<dbReference type="Ensembl" id="ENST00000615557.1">
    <molecule id="Q8TDC0-3"/>
    <property type="protein sequence ID" value="ENSP00000478375.1"/>
    <property type="gene ID" value="ENSG00000164591.14"/>
</dbReference>
<dbReference type="GeneID" id="91977"/>
<dbReference type="KEGG" id="hsa:91977"/>
<dbReference type="MANE-Select" id="ENST00000517768.6">
    <property type="protein sequence ID" value="ENSP00000428815.1"/>
    <property type="RefSeq nucleotide sequence ID" value="NM_001122853.3"/>
    <property type="RefSeq protein sequence ID" value="NP_001116325.1"/>
</dbReference>
<dbReference type="UCSC" id="uc003lsr.4">
    <molecule id="Q8TDC0-1"/>
    <property type="organism name" value="human"/>
</dbReference>
<dbReference type="AGR" id="HGNC:18565"/>
<dbReference type="CTD" id="91977"/>
<dbReference type="DisGeNET" id="91977"/>
<dbReference type="GeneCards" id="MYOZ3"/>
<dbReference type="HGNC" id="HGNC:18565">
    <property type="gene designation" value="MYOZ3"/>
</dbReference>
<dbReference type="HPA" id="ENSG00000164591">
    <property type="expression patterns" value="Group enriched (skeletal muscle, tongue)"/>
</dbReference>
<dbReference type="MIM" id="610735">
    <property type="type" value="gene"/>
</dbReference>
<dbReference type="neXtProt" id="NX_Q8TDC0"/>
<dbReference type="OpenTargets" id="ENSG00000164591"/>
<dbReference type="PharmGKB" id="PA38577"/>
<dbReference type="VEuPathDB" id="HostDB:ENSG00000164591"/>
<dbReference type="eggNOG" id="ENOG502S22C">
    <property type="taxonomic scope" value="Eukaryota"/>
</dbReference>
<dbReference type="GeneTree" id="ENSGT00950000183027"/>
<dbReference type="HOGENOM" id="CLU_071316_1_0_1"/>
<dbReference type="InParanoid" id="Q8TDC0"/>
<dbReference type="OMA" id="WIQVMPE"/>
<dbReference type="OrthoDB" id="9887337at2759"/>
<dbReference type="PAN-GO" id="Q8TDC0">
    <property type="GO annotations" value="5 GO annotations based on evolutionary models"/>
</dbReference>
<dbReference type="PhylomeDB" id="Q8TDC0"/>
<dbReference type="TreeFam" id="TF331748"/>
<dbReference type="PathwayCommons" id="Q8TDC0"/>
<dbReference type="SignaLink" id="Q8TDC0"/>
<dbReference type="BioGRID-ORCS" id="91977">
    <property type="hits" value="13 hits in 1158 CRISPR screens"/>
</dbReference>
<dbReference type="GenomeRNAi" id="91977"/>
<dbReference type="Pharos" id="Q8TDC0">
    <property type="development level" value="Tdark"/>
</dbReference>
<dbReference type="PRO" id="PR:Q8TDC0"/>
<dbReference type="Proteomes" id="UP000005640">
    <property type="component" value="Chromosome 5"/>
</dbReference>
<dbReference type="RNAct" id="Q8TDC0">
    <property type="molecule type" value="protein"/>
</dbReference>
<dbReference type="Bgee" id="ENSG00000164591">
    <property type="expression patterns" value="Expressed in skeletal muscle tissue of rectus abdominis and 150 other cell types or tissues"/>
</dbReference>
<dbReference type="ExpressionAtlas" id="Q8TDC0">
    <property type="expression patterns" value="baseline and differential"/>
</dbReference>
<dbReference type="GO" id="GO:0015629">
    <property type="term" value="C:actin cytoskeleton"/>
    <property type="evidence" value="ECO:0000318"/>
    <property type="project" value="GO_Central"/>
</dbReference>
<dbReference type="GO" id="GO:0030018">
    <property type="term" value="C:Z disc"/>
    <property type="evidence" value="ECO:0000318"/>
    <property type="project" value="GO_Central"/>
</dbReference>
<dbReference type="GO" id="GO:0003779">
    <property type="term" value="F:actin binding"/>
    <property type="evidence" value="ECO:0000318"/>
    <property type="project" value="GO_Central"/>
</dbReference>
<dbReference type="GO" id="GO:0051373">
    <property type="term" value="F:FATZ binding"/>
    <property type="evidence" value="ECO:0000318"/>
    <property type="project" value="GO_Central"/>
</dbReference>
<dbReference type="GO" id="GO:0031433">
    <property type="term" value="F:telethonin binding"/>
    <property type="evidence" value="ECO:0000318"/>
    <property type="project" value="GO_Central"/>
</dbReference>
<dbReference type="InterPro" id="IPR008438">
    <property type="entry name" value="MYOZ"/>
</dbReference>
<dbReference type="PANTHER" id="PTHR15941">
    <property type="entry name" value="MYOZENIN"/>
    <property type="match status" value="1"/>
</dbReference>
<dbReference type="PANTHER" id="PTHR15941:SF15">
    <property type="entry name" value="MYOZENIN-3"/>
    <property type="match status" value="1"/>
</dbReference>
<dbReference type="Pfam" id="PF05556">
    <property type="entry name" value="Calsarcin"/>
    <property type="match status" value="1"/>
</dbReference>
<sequence length="251" mass="27157">MIPKEQKGPVMAAMGDLTEPVPTLDLGKKLSVPQDLMMEELSLRNNRGSLLFQKRQRRVQKFTFELAASQRAMLAGSARRKVTGTAESGTVANANGPEGPNYRSELHIFPASPGASLGGPEGAHPAAAPAGCVPSPSALAPGYAEPLKGVPPEKFNHTAISKGYRCPWQEFVSYRDYQSDGRSHTPSPNDYRNFNKTPVPFGGPLVGGTFPRPGTPFIPEPLSGLELLRLRPSFNRVAQGWVRNLPESEEL</sequence>
<protein>
    <recommendedName>
        <fullName>Myozenin-3</fullName>
    </recommendedName>
    <alternativeName>
        <fullName>Calsarcin-3</fullName>
    </alternativeName>
    <alternativeName>
        <fullName>FATZ-related protein 3</fullName>
    </alternativeName>
</protein>
<comment type="function">
    <text>Myozenins may serve as intracellular binding proteins involved in linking Z line proteins such as alpha-actinin, gamma-filamin, TCAP/telethonin, LDB3/ZASP and localizing calcineurin signaling to the sarcomere. Plays an important role in the modulation of calcineurin signaling. May play a role in myofibrillogenesis.</text>
</comment>
<comment type="subunit">
    <text evidence="4">Interacts with ACTN2, LDB3, FLNC, PPP3CA and TCAP.</text>
</comment>
<comment type="interaction">
    <interactant intactId="EBI-5662487">
        <id>Q8TDC0</id>
    </interactant>
    <interactant intactId="EBI-11096309">
        <id>Q9NYB9-2</id>
        <label>ABI2</label>
    </interactant>
    <organismsDiffer>false</organismsDiffer>
    <experiments>3</experiments>
</comment>
<comment type="interaction">
    <interactant intactId="EBI-5662487">
        <id>Q8TDC0</id>
    </interactant>
    <interactant intactId="EBI-742928">
        <id>Q53H80</id>
        <label>AKIRIN2</label>
    </interactant>
    <organismsDiffer>false</organismsDiffer>
    <experiments>3</experiments>
</comment>
<comment type="interaction">
    <interactant intactId="EBI-5662487">
        <id>Q8TDC0</id>
    </interactant>
    <interactant intactId="EBI-19946665">
        <id>Q86U10</id>
        <label>ASPG</label>
    </interactant>
    <organismsDiffer>false</organismsDiffer>
    <experiments>3</experiments>
</comment>
<comment type="interaction">
    <interactant intactId="EBI-5662487">
        <id>Q8TDC0</id>
    </interactant>
    <interactant intactId="EBI-745689">
        <id>Q7L5A3</id>
        <label>ATOSB</label>
    </interactant>
    <organismsDiffer>false</organismsDiffer>
    <experiments>3</experiments>
</comment>
<comment type="interaction">
    <interactant intactId="EBI-5662487">
        <id>Q8TDC0</id>
    </interactant>
    <interactant intactId="EBI-8624731">
        <id>P0C7T5</id>
        <label>ATXN1L</label>
    </interactant>
    <organismsDiffer>false</organismsDiffer>
    <experiments>3</experiments>
</comment>
<comment type="interaction">
    <interactant intactId="EBI-5662487">
        <id>Q8TDC0</id>
    </interactant>
    <interactant intactId="EBI-2949658">
        <id>O95429</id>
        <label>BAG4</label>
    </interactant>
    <organismsDiffer>false</organismsDiffer>
    <experiments>3</experiments>
</comment>
<comment type="interaction">
    <interactant intactId="EBI-5662487">
        <id>Q8TDC0</id>
    </interactant>
    <interactant intactId="EBI-1050106">
        <id>O75934</id>
        <label>BCAS2</label>
    </interactant>
    <organismsDiffer>false</organismsDiffer>
    <experiments>3</experiments>
</comment>
<comment type="interaction">
    <interactant intactId="EBI-5662487">
        <id>Q8TDC0</id>
    </interactant>
    <interactant intactId="EBI-12809220">
        <id>Q5SWW7</id>
        <label>C10orf55</label>
    </interactant>
    <organismsDiffer>false</organismsDiffer>
    <experiments>3</experiments>
</comment>
<comment type="interaction">
    <interactant intactId="EBI-5662487">
        <id>Q8TDC0</id>
    </interactant>
    <interactant intactId="EBI-10961624">
        <id>Q2TAC2-2</id>
        <label>CCDC57</label>
    </interactant>
    <organismsDiffer>false</organismsDiffer>
    <experiments>3</experiments>
</comment>
<comment type="interaction">
    <interactant intactId="EBI-5662487">
        <id>Q8TDC0</id>
    </interactant>
    <interactant intactId="EBI-12160437">
        <id>A8MTA8-2</id>
        <label>CIMIP2B</label>
    </interactant>
    <organismsDiffer>false</organismsDiffer>
    <experiments>3</experiments>
</comment>
<comment type="interaction">
    <interactant intactId="EBI-5662487">
        <id>Q8TDC0</id>
    </interactant>
    <interactant intactId="EBI-12884642">
        <id>Q03060-25</id>
        <label>CREM</label>
    </interactant>
    <organismsDiffer>false</organismsDiffer>
    <experiments>3</experiments>
</comment>
<comment type="interaction">
    <interactant intactId="EBI-5662487">
        <id>Q8TDC0</id>
    </interactant>
    <interactant intactId="EBI-2872414">
        <id>Q8IUI8</id>
        <label>CRLF3</label>
    </interactant>
    <organismsDiffer>false</organismsDiffer>
    <experiments>3</experiments>
</comment>
<comment type="interaction">
    <interactant intactId="EBI-5662487">
        <id>Q8TDC0</id>
    </interactant>
    <interactant intactId="EBI-724310">
        <id>Q15038</id>
        <label>DAZAP2</label>
    </interactant>
    <organismsDiffer>false</organismsDiffer>
    <experiments>3</experiments>
</comment>
<comment type="interaction">
    <interactant intactId="EBI-5662487">
        <id>Q8TDC0</id>
    </interactant>
    <interactant intactId="EBI-9679045">
        <id>Q9NQL9</id>
        <label>DMRT3</label>
    </interactant>
    <organismsDiffer>false</organismsDiffer>
    <experiments>3</experiments>
</comment>
<comment type="interaction">
    <interactant intactId="EBI-5662487">
        <id>Q8TDC0</id>
    </interactant>
    <interactant intactId="EBI-11525448">
        <id>O43281-2</id>
        <label>EFS</label>
    </interactant>
    <organismsDiffer>false</organismsDiffer>
    <experiments>3</experiments>
</comment>
<comment type="interaction">
    <interactant intactId="EBI-5662487">
        <id>Q8TDC0</id>
    </interactant>
    <interactant intactId="EBI-744099">
        <id>Q9H0I2</id>
        <label>ENKD1</label>
    </interactant>
    <organismsDiffer>false</organismsDiffer>
    <experiments>3</experiments>
</comment>
<comment type="interaction">
    <interactant intactId="EBI-5662487">
        <id>Q8TDC0</id>
    </interactant>
    <interactant intactId="EBI-742102">
        <id>Q8IYI6</id>
        <label>EXOC8</label>
    </interactant>
    <organismsDiffer>false</organismsDiffer>
    <experiments>3</experiments>
</comment>
<comment type="interaction">
    <interactant intactId="EBI-5662487">
        <id>Q8TDC0</id>
    </interactant>
    <interactant intactId="EBI-12193763">
        <id>A1KXE4-2</id>
        <label>FAM168B</label>
    </interactant>
    <organismsDiffer>false</organismsDiffer>
    <experiments>3</experiments>
</comment>
<comment type="interaction">
    <interactant intactId="EBI-5662487">
        <id>Q8TDC0</id>
    </interactant>
    <interactant intactId="EBI-741101">
        <id>Q13643</id>
        <label>FHL3</label>
    </interactant>
    <organismsDiffer>false</organismsDiffer>
    <experiments>3</experiments>
</comment>
<comment type="interaction">
    <interactant intactId="EBI-5662487">
        <id>Q8TDC0</id>
    </interactant>
    <interactant intactId="EBI-750641">
        <id>Q5TD97</id>
        <label>FHL5</label>
    </interactant>
    <organismsDiffer>false</organismsDiffer>
    <experiments>3</experiments>
</comment>
<comment type="interaction">
    <interactant intactId="EBI-5662487">
        <id>Q8TDC0</id>
    </interactant>
    <interactant intactId="EBI-10188645">
        <id>O75603</id>
        <label>GCM2</label>
    </interactant>
    <organismsDiffer>false</organismsDiffer>
    <experiments>3</experiments>
</comment>
<comment type="interaction">
    <interactant intactId="EBI-5662487">
        <id>Q8TDC0</id>
    </interactant>
    <interactant intactId="EBI-11163335">
        <id>Q9NYA3</id>
        <label>GOLGA6A</label>
    </interactant>
    <organismsDiffer>false</organismsDiffer>
    <experiments>3</experiments>
</comment>
<comment type="interaction">
    <interactant intactId="EBI-5662487">
        <id>Q8TDC0</id>
    </interactant>
    <interactant intactId="EBI-5916454">
        <id>A6NEM1</id>
        <label>GOLGA6L9</label>
    </interactant>
    <organismsDiffer>false</organismsDiffer>
    <experiments>3</experiments>
</comment>
<comment type="interaction">
    <interactant intactId="EBI-5662487">
        <id>Q8TDC0</id>
    </interactant>
    <interactant intactId="EBI-7116203">
        <id>O75031</id>
        <label>HSF2BP</label>
    </interactant>
    <organismsDiffer>false</organismsDiffer>
    <experiments>3</experiments>
</comment>
<comment type="interaction">
    <interactant intactId="EBI-5662487">
        <id>Q8TDC0</id>
    </interactant>
    <interactant intactId="EBI-2556193">
        <id>Q63ZY3</id>
        <label>KANK2</label>
    </interactant>
    <organismsDiffer>false</organismsDiffer>
    <experiments>3</experiments>
</comment>
<comment type="interaction">
    <interactant intactId="EBI-5662487">
        <id>Q8TDC0</id>
    </interactant>
    <interactant intactId="EBI-1047093">
        <id>O76011</id>
        <label>KRT34</label>
    </interactant>
    <organismsDiffer>false</organismsDiffer>
    <experiments>3</experiments>
</comment>
<comment type="interaction">
    <interactant intactId="EBI-5662487">
        <id>Q8TDC0</id>
    </interactant>
    <interactant intactId="EBI-11958506">
        <id>O76013-2</id>
        <label>KRT36</label>
    </interactant>
    <organismsDiffer>false</organismsDiffer>
    <experiments>3</experiments>
</comment>
<comment type="interaction">
    <interactant intactId="EBI-5662487">
        <id>Q8TDC0</id>
    </interactant>
    <interactant intactId="EBI-2949715">
        <id>O95678</id>
        <label>KRT75</label>
    </interactant>
    <organismsDiffer>false</organismsDiffer>
    <experiments>3</experiments>
</comment>
<comment type="interaction">
    <interactant intactId="EBI-5662487">
        <id>Q8TDC0</id>
    </interactant>
    <interactant intactId="EBI-1048945">
        <id>Q3LI72</id>
        <label>KRTAP19-5</label>
    </interactant>
    <organismsDiffer>false</organismsDiffer>
    <experiments>3</experiments>
</comment>
<comment type="interaction">
    <interactant intactId="EBI-5662487">
        <id>Q8TDC0</id>
    </interactant>
    <interactant intactId="EBI-12805508">
        <id>Q3LI70</id>
        <label>KRTAP19-6</label>
    </interactant>
    <organismsDiffer>false</organismsDiffer>
    <experiments>3</experiments>
</comment>
<comment type="interaction">
    <interactant intactId="EBI-5662487">
        <id>Q8TDC0</id>
    </interactant>
    <interactant intactId="EBI-12111050">
        <id>Q3LI64</id>
        <label>KRTAP6-1</label>
    </interactant>
    <organismsDiffer>false</organismsDiffer>
    <experiments>3</experiments>
</comment>
<comment type="interaction">
    <interactant intactId="EBI-5662487">
        <id>Q8TDC0</id>
    </interactant>
    <interactant intactId="EBI-18394498">
        <id>Q8IUC3</id>
        <label>KRTAP7-1</label>
    </interactant>
    <organismsDiffer>false</organismsDiffer>
    <experiments>3</experiments>
</comment>
<comment type="interaction">
    <interactant intactId="EBI-5662487">
        <id>Q8TDC0</id>
    </interactant>
    <interactant intactId="EBI-10261141">
        <id>Q8IUC2</id>
        <label>KRTAP8-1</label>
    </interactant>
    <organismsDiffer>false</organismsDiffer>
    <experiments>5</experiments>
</comment>
<comment type="interaction">
    <interactant intactId="EBI-5662487">
        <id>Q8TDC0</id>
    </interactant>
    <interactant intactId="EBI-12351611">
        <id>Q16719-2</id>
        <label>KYNU</label>
    </interactant>
    <organismsDiffer>false</organismsDiffer>
    <experiments>3</experiments>
</comment>
<comment type="interaction">
    <interactant intactId="EBI-5662487">
        <id>Q8TDC0</id>
    </interactant>
    <interactant intactId="EBI-739546">
        <id>Q96PV6</id>
        <label>LENG8</label>
    </interactant>
    <organismsDiffer>false</organismsDiffer>
    <experiments>3</experiments>
</comment>
<comment type="interaction">
    <interactant intactId="EBI-5662487">
        <id>Q8TDC0</id>
    </interactant>
    <interactant intactId="EBI-11959475">
        <id>P25791-3</id>
        <label>LMO2</label>
    </interactant>
    <organismsDiffer>false</organismsDiffer>
    <experiments>3</experiments>
</comment>
<comment type="interaction">
    <interactant intactId="EBI-5662487">
        <id>Q8TDC0</id>
    </interactant>
    <interactant intactId="EBI-11742507">
        <id>Q8TAP4-4</id>
        <label>LMO3</label>
    </interactant>
    <organismsDiffer>false</organismsDiffer>
    <experiments>3</experiments>
</comment>
<comment type="interaction">
    <interactant intactId="EBI-5662487">
        <id>Q8TDC0</id>
    </interactant>
    <interactant intactId="EBI-2798728">
        <id>P61968</id>
        <label>LMO4</label>
    </interactant>
    <organismsDiffer>false</organismsDiffer>
    <experiments>3</experiments>
</comment>
<comment type="interaction">
    <interactant intactId="EBI-5662487">
        <id>Q8TDC0</id>
    </interactant>
    <interactant intactId="EBI-2341787">
        <id>Q17RB8</id>
        <label>LONRF1</label>
    </interactant>
    <organismsDiffer>false</organismsDiffer>
    <experiments>3</experiments>
</comment>
<comment type="interaction">
    <interactant intactId="EBI-5662487">
        <id>Q8TDC0</id>
    </interactant>
    <interactant intactId="EBI-9675802">
        <id>Q6PF18</id>
        <label>MORN3</label>
    </interactant>
    <organismsDiffer>false</organismsDiffer>
    <experiments>3</experiments>
</comment>
<comment type="interaction">
    <interactant intactId="EBI-5662487">
        <id>Q8TDC0</id>
    </interactant>
    <interactant intactId="EBI-720441">
        <id>Q96DV4</id>
        <label>MRPL38</label>
    </interactant>
    <organismsDiffer>false</organismsDiffer>
    <experiments>3</experiments>
</comment>
<comment type="interaction">
    <interactant intactId="EBI-5662487">
        <id>Q8TDC0</id>
    </interactant>
    <interactant intactId="EBI-7950783">
        <id>Q96JP2</id>
        <label>MYO15B</label>
    </interactant>
    <organismsDiffer>false</organismsDiffer>
    <experiments>3</experiments>
</comment>
<comment type="interaction">
    <interactant intactId="EBI-5662487">
        <id>Q8TDC0</id>
    </interactant>
    <interactant intactId="EBI-11750983">
        <id>Q9HC98-4</id>
        <label>NEK6</label>
    </interactant>
    <organismsDiffer>false</organismsDiffer>
    <experiments>3</experiments>
</comment>
<comment type="interaction">
    <interactant intactId="EBI-5662487">
        <id>Q8TDC0</id>
    </interactant>
    <interactant intactId="EBI-591778">
        <id>P61970</id>
        <label>NUTF2</label>
    </interactant>
    <organismsDiffer>false</organismsDiffer>
    <experiments>3</experiments>
</comment>
<comment type="interaction">
    <interactant intactId="EBI-5662487">
        <id>Q8TDC0</id>
    </interactant>
    <interactant intactId="EBI-748265">
        <id>P78337</id>
        <label>PITX1</label>
    </interactant>
    <organismsDiffer>false</organismsDiffer>
    <experiments>3</experiments>
</comment>
<comment type="interaction">
    <interactant intactId="EBI-5662487">
        <id>Q8TDC0</id>
    </interactant>
    <interactant intactId="EBI-11339910">
        <id>Q8IYS1</id>
        <label>PM20D2</label>
    </interactant>
    <organismsDiffer>false</organismsDiffer>
    <experiments>3</experiments>
</comment>
<comment type="interaction">
    <interactant intactId="EBI-5662487">
        <id>Q8TDC0</id>
    </interactant>
    <interactant intactId="EBI-11320284">
        <id>Q9NQX0</id>
        <label>PRDM6</label>
    </interactant>
    <organismsDiffer>false</organismsDiffer>
    <experiments>3</experiments>
</comment>
<comment type="interaction">
    <interactant intactId="EBI-5662487">
        <id>Q8TDC0</id>
    </interactant>
    <interactant intactId="EBI-603350">
        <id>P28070</id>
        <label>PSMB4</label>
    </interactant>
    <organismsDiffer>false</organismsDiffer>
    <experiments>3</experiments>
</comment>
<comment type="interaction">
    <interactant intactId="EBI-5662487">
        <id>Q8TDC0</id>
    </interactant>
    <interactant intactId="EBI-1383632">
        <id>Q13882</id>
        <label>PTK6</label>
    </interactant>
    <organismsDiffer>false</organismsDiffer>
    <experiments>3</experiments>
</comment>
<comment type="interaction">
    <interactant intactId="EBI-5662487">
        <id>Q8TDC0</id>
    </interactant>
    <interactant intactId="EBI-726876">
        <id>Q6NUQ1</id>
        <label>RINT1</label>
    </interactant>
    <organismsDiffer>false</organismsDiffer>
    <experiments>3</experiments>
</comment>
<comment type="interaction">
    <interactant intactId="EBI-5662487">
        <id>Q8TDC0</id>
    </interactant>
    <interactant intactId="EBI-6257312">
        <id>Q9BVN2</id>
        <label>RUSC1</label>
    </interactant>
    <organismsDiffer>false</organismsDiffer>
    <experiments>3</experiments>
</comment>
<comment type="interaction">
    <interactant intactId="EBI-5662487">
        <id>Q8TDC0</id>
    </interactant>
    <interactant intactId="EBI-12831628">
        <id>Q8WW14-2</id>
        <label>SPMIP5</label>
    </interactant>
    <organismsDiffer>false</organismsDiffer>
    <experiments>3</experiments>
</comment>
<comment type="interaction">
    <interactant intactId="EBI-5662487">
        <id>Q8TDC0</id>
    </interactant>
    <interactant intactId="EBI-10191361">
        <id>Q96SF7</id>
        <label>TBX15</label>
    </interactant>
    <organismsDiffer>false</organismsDiffer>
    <experiments>3</experiments>
</comment>
<comment type="interaction">
    <interactant intactId="EBI-5662487">
        <id>Q8TDC0</id>
    </interactant>
    <interactant intactId="EBI-750487">
        <id>Q8WW24</id>
        <label>TEKT4</label>
    </interactant>
    <organismsDiffer>false</organismsDiffer>
    <experiments>3</experiments>
</comment>
<comment type="interaction">
    <interactant intactId="EBI-5662487">
        <id>Q8TDC0</id>
    </interactant>
    <interactant intactId="EBI-8451480">
        <id>O75865-2</id>
        <label>TRAPPC6A</label>
    </interactant>
    <organismsDiffer>false</organismsDiffer>
    <experiments>3</experiments>
</comment>
<comment type="interaction">
    <interactant intactId="EBI-5662487">
        <id>Q8TDC0</id>
    </interactant>
    <interactant intactId="EBI-12806590">
        <id>Q86WV8</id>
        <label>TSC1</label>
    </interactant>
    <organismsDiffer>false</organismsDiffer>
    <experiments>3</experiments>
</comment>
<comment type="interaction">
    <interactant intactId="EBI-5662487">
        <id>Q8TDC0</id>
    </interactant>
    <interactant intactId="EBI-3918381">
        <id>Q96PN8</id>
        <label>TSSK3</label>
    </interactant>
    <organismsDiffer>false</organismsDiffer>
    <experiments>3</experiments>
</comment>
<comment type="interaction">
    <interactant intactId="EBI-5662487">
        <id>Q8TDC0</id>
    </interactant>
    <interactant intactId="EBI-12068150">
        <id>Q6NVU6</id>
        <label>UFSP1</label>
    </interactant>
    <organismsDiffer>false</organismsDiffer>
    <experiments>3</experiments>
</comment>
<comment type="interaction">
    <interactant intactId="EBI-5662487">
        <id>Q8TDC0</id>
    </interactant>
    <interactant intactId="EBI-4395669">
        <id>Q6ZNG0</id>
        <label>ZNF620</label>
    </interactant>
    <organismsDiffer>false</organismsDiffer>
    <experiments>3</experiments>
</comment>
<comment type="interaction">
    <interactant intactId="EBI-5662487">
        <id>Q8TDC0</id>
    </interactant>
    <interactant intactId="EBI-4395732">
        <id>P0C7X2</id>
        <label>ZNF688</label>
    </interactant>
    <organismsDiffer>false</organismsDiffer>
    <experiments>3</experiments>
</comment>
<comment type="subcellular location">
    <subcellularLocation>
        <location evidence="1">Cytoplasm</location>
        <location evidence="1">Myofibril</location>
        <location evidence="1">Sarcomere</location>
        <location evidence="1">Z line</location>
    </subcellularLocation>
    <text evidence="1">Localized at the Z-line of skeletal muscle.</text>
</comment>
<comment type="alternative products">
    <event type="alternative splicing"/>
    <isoform>
        <id>Q8TDC0-1</id>
        <name evidence="4">1</name>
        <sequence type="displayed"/>
    </isoform>
    <isoform>
        <id>Q8TDC0-2</id>
        <name evidence="7">2</name>
        <sequence type="described" ref="VSP_051879"/>
    </isoform>
    <isoform>
        <id>Q8TDC0-3</id>
        <name evidence="7">3</name>
        <sequence type="described" ref="VSP_051876 VSP_051877 VSP_051878"/>
    </isoform>
</comment>
<comment type="tissue specificity">
    <text evidence="4">Expressed specifically in skeletal muscle. Not detected in heart.</text>
</comment>
<comment type="similarity">
    <text evidence="10">Belongs to the myozenin family.</text>
</comment>
<reference evidence="10 13" key="1">
    <citation type="journal article" date="2002" name="J. Biol. Chem.">
        <title>Calsarcin-3, a novel skeletal muscle-specific member of the calsarcin family, interacts with multiple Z-disc proteins.</title>
        <authorList>
            <person name="Frey N."/>
            <person name="Olson E.N."/>
        </authorList>
    </citation>
    <scope>NUCLEOTIDE SEQUENCE [MRNA] (ISOFORM 1)</scope>
    <scope>VARIANT PRO-161</scope>
    <scope>INTERACTION WITH ACTN2; FLNC; LDB3; PPP3CA AND TCAP</scope>
    <scope>TISSUE SPECIFICITY</scope>
</reference>
<reference evidence="10 14" key="2">
    <citation type="submission" date="2000-12" db="EMBL/GenBank/DDBJ databases">
        <title>New muscular proteins.</title>
        <authorList>
            <person name="Scannapieco P."/>
            <person name="Greggio E."/>
            <person name="Bortoletto G."/>
            <person name="Ievolella C."/>
            <person name="Lanfranchi G."/>
        </authorList>
    </citation>
    <scope>NUCLEOTIDE SEQUENCE [MRNA] (ISOFORMS 1; 2 AND 3)</scope>
    <scope>VARIANT PRO-161</scope>
    <source>
        <tissue evidence="14">Skeletal muscle</tissue>
    </source>
</reference>
<reference key="3">
    <citation type="journal article" date="2004" name="Nat. Genet.">
        <title>Complete sequencing and characterization of 21,243 full-length human cDNAs.</title>
        <authorList>
            <person name="Ota T."/>
            <person name="Suzuki Y."/>
            <person name="Nishikawa T."/>
            <person name="Otsuki T."/>
            <person name="Sugiyama T."/>
            <person name="Irie R."/>
            <person name="Wakamatsu A."/>
            <person name="Hayashi K."/>
            <person name="Sato H."/>
            <person name="Nagai K."/>
            <person name="Kimura K."/>
            <person name="Makita H."/>
            <person name="Sekine M."/>
            <person name="Obayashi M."/>
            <person name="Nishi T."/>
            <person name="Shibahara T."/>
            <person name="Tanaka T."/>
            <person name="Ishii S."/>
            <person name="Yamamoto J."/>
            <person name="Saito K."/>
            <person name="Kawai Y."/>
            <person name="Isono Y."/>
            <person name="Nakamura Y."/>
            <person name="Nagahari K."/>
            <person name="Murakami K."/>
            <person name="Yasuda T."/>
            <person name="Iwayanagi T."/>
            <person name="Wagatsuma M."/>
            <person name="Shiratori A."/>
            <person name="Sudo H."/>
            <person name="Hosoiri T."/>
            <person name="Kaku Y."/>
            <person name="Kodaira H."/>
            <person name="Kondo H."/>
            <person name="Sugawara M."/>
            <person name="Takahashi M."/>
            <person name="Kanda K."/>
            <person name="Yokoi T."/>
            <person name="Furuya T."/>
            <person name="Kikkawa E."/>
            <person name="Omura Y."/>
            <person name="Abe K."/>
            <person name="Kamihara K."/>
            <person name="Katsuta N."/>
            <person name="Sato K."/>
            <person name="Tanikawa M."/>
            <person name="Yamazaki M."/>
            <person name="Ninomiya K."/>
            <person name="Ishibashi T."/>
            <person name="Yamashita H."/>
            <person name="Murakawa K."/>
            <person name="Fujimori K."/>
            <person name="Tanai H."/>
            <person name="Kimata M."/>
            <person name="Watanabe M."/>
            <person name="Hiraoka S."/>
            <person name="Chiba Y."/>
            <person name="Ishida S."/>
            <person name="Ono Y."/>
            <person name="Takiguchi S."/>
            <person name="Watanabe S."/>
            <person name="Yosida M."/>
            <person name="Hotuta T."/>
            <person name="Kusano J."/>
            <person name="Kanehori K."/>
            <person name="Takahashi-Fujii A."/>
            <person name="Hara H."/>
            <person name="Tanase T.-O."/>
            <person name="Nomura Y."/>
            <person name="Togiya S."/>
            <person name="Komai F."/>
            <person name="Hara R."/>
            <person name="Takeuchi K."/>
            <person name="Arita M."/>
            <person name="Imose N."/>
            <person name="Musashino K."/>
            <person name="Yuuki H."/>
            <person name="Oshima A."/>
            <person name="Sasaki N."/>
            <person name="Aotsuka S."/>
            <person name="Yoshikawa Y."/>
            <person name="Matsunawa H."/>
            <person name="Ichihara T."/>
            <person name="Shiohata N."/>
            <person name="Sano S."/>
            <person name="Moriya S."/>
            <person name="Momiyama H."/>
            <person name="Satoh N."/>
            <person name="Takami S."/>
            <person name="Terashima Y."/>
            <person name="Suzuki O."/>
            <person name="Nakagawa S."/>
            <person name="Senoh A."/>
            <person name="Mizoguchi H."/>
            <person name="Goto Y."/>
            <person name="Shimizu F."/>
            <person name="Wakebe H."/>
            <person name="Hishigaki H."/>
            <person name="Watanabe T."/>
            <person name="Sugiyama A."/>
            <person name="Takemoto M."/>
            <person name="Kawakami B."/>
            <person name="Yamazaki M."/>
            <person name="Watanabe K."/>
            <person name="Kumagai A."/>
            <person name="Itakura S."/>
            <person name="Fukuzumi Y."/>
            <person name="Fujimori Y."/>
            <person name="Komiyama M."/>
            <person name="Tashiro H."/>
            <person name="Tanigami A."/>
            <person name="Fujiwara T."/>
            <person name="Ono T."/>
            <person name="Yamada K."/>
            <person name="Fujii Y."/>
            <person name="Ozaki K."/>
            <person name="Hirao M."/>
            <person name="Ohmori Y."/>
            <person name="Kawabata A."/>
            <person name="Hikiji T."/>
            <person name="Kobatake N."/>
            <person name="Inagaki H."/>
            <person name="Ikema Y."/>
            <person name="Okamoto S."/>
            <person name="Okitani R."/>
            <person name="Kawakami T."/>
            <person name="Noguchi S."/>
            <person name="Itoh T."/>
            <person name="Shigeta K."/>
            <person name="Senba T."/>
            <person name="Matsumura K."/>
            <person name="Nakajima Y."/>
            <person name="Mizuno T."/>
            <person name="Morinaga M."/>
            <person name="Sasaki M."/>
            <person name="Togashi T."/>
            <person name="Oyama M."/>
            <person name="Hata H."/>
            <person name="Watanabe M."/>
            <person name="Komatsu T."/>
            <person name="Mizushima-Sugano J."/>
            <person name="Satoh T."/>
            <person name="Shirai Y."/>
            <person name="Takahashi Y."/>
            <person name="Nakagawa K."/>
            <person name="Okumura K."/>
            <person name="Nagase T."/>
            <person name="Nomura N."/>
            <person name="Kikuchi H."/>
            <person name="Masuho Y."/>
            <person name="Yamashita R."/>
            <person name="Nakai K."/>
            <person name="Yada T."/>
            <person name="Nakamura Y."/>
            <person name="Ohara O."/>
            <person name="Isogai T."/>
            <person name="Sugano S."/>
        </authorList>
    </citation>
    <scope>NUCLEOTIDE SEQUENCE [LARGE SCALE MRNA] (ISOFORM 1)</scope>
    <scope>VARIANT PRO-161</scope>
    <source>
        <tissue>Testis</tissue>
    </source>
</reference>
<reference key="4">
    <citation type="journal article" date="2004" name="Nature">
        <title>The DNA sequence and comparative analysis of human chromosome 5.</title>
        <authorList>
            <person name="Schmutz J."/>
            <person name="Martin J."/>
            <person name="Terry A."/>
            <person name="Couronne O."/>
            <person name="Grimwood J."/>
            <person name="Lowry S."/>
            <person name="Gordon L.A."/>
            <person name="Scott D."/>
            <person name="Xie G."/>
            <person name="Huang W."/>
            <person name="Hellsten U."/>
            <person name="Tran-Gyamfi M."/>
            <person name="She X."/>
            <person name="Prabhakar S."/>
            <person name="Aerts A."/>
            <person name="Altherr M."/>
            <person name="Bajorek E."/>
            <person name="Black S."/>
            <person name="Branscomb E."/>
            <person name="Caoile C."/>
            <person name="Challacombe J.F."/>
            <person name="Chan Y.M."/>
            <person name="Denys M."/>
            <person name="Detter J.C."/>
            <person name="Escobar J."/>
            <person name="Flowers D."/>
            <person name="Fotopulos D."/>
            <person name="Glavina T."/>
            <person name="Gomez M."/>
            <person name="Gonzales E."/>
            <person name="Goodstein D."/>
            <person name="Grigoriev I."/>
            <person name="Groza M."/>
            <person name="Hammon N."/>
            <person name="Hawkins T."/>
            <person name="Haydu L."/>
            <person name="Israni S."/>
            <person name="Jett J."/>
            <person name="Kadner K."/>
            <person name="Kimball H."/>
            <person name="Kobayashi A."/>
            <person name="Lopez F."/>
            <person name="Lou Y."/>
            <person name="Martinez D."/>
            <person name="Medina C."/>
            <person name="Morgan J."/>
            <person name="Nandkeshwar R."/>
            <person name="Noonan J.P."/>
            <person name="Pitluck S."/>
            <person name="Pollard M."/>
            <person name="Predki P."/>
            <person name="Priest J."/>
            <person name="Ramirez L."/>
            <person name="Retterer J."/>
            <person name="Rodriguez A."/>
            <person name="Rogers S."/>
            <person name="Salamov A."/>
            <person name="Salazar A."/>
            <person name="Thayer N."/>
            <person name="Tice H."/>
            <person name="Tsai M."/>
            <person name="Ustaszewska A."/>
            <person name="Vo N."/>
            <person name="Wheeler J."/>
            <person name="Wu K."/>
            <person name="Yang J."/>
            <person name="Dickson M."/>
            <person name="Cheng J.-F."/>
            <person name="Eichler E.E."/>
            <person name="Olsen A."/>
            <person name="Pennacchio L.A."/>
            <person name="Rokhsar D.S."/>
            <person name="Richardson P."/>
            <person name="Lucas S.M."/>
            <person name="Myers R.M."/>
            <person name="Rubin E.M."/>
        </authorList>
    </citation>
    <scope>NUCLEOTIDE SEQUENCE [LARGE SCALE GENOMIC DNA]</scope>
</reference>
<reference evidence="10 14" key="5">
    <citation type="submission" date="2005-09" db="EMBL/GenBank/DDBJ databases">
        <authorList>
            <person name="Mural R.J."/>
            <person name="Istrail S."/>
            <person name="Sutton G.G."/>
            <person name="Florea L."/>
            <person name="Halpern A.L."/>
            <person name="Mobarry C.M."/>
            <person name="Lippert R."/>
            <person name="Walenz B."/>
            <person name="Shatkay H."/>
            <person name="Dew I."/>
            <person name="Miller J.R."/>
            <person name="Flanigan M.J."/>
            <person name="Edwards N.J."/>
            <person name="Bolanos R."/>
            <person name="Fasulo D."/>
            <person name="Halldorsson B.V."/>
            <person name="Hannenhalli S."/>
            <person name="Turner R."/>
            <person name="Yooseph S."/>
            <person name="Lu F."/>
            <person name="Nusskern D.R."/>
            <person name="Shue B.C."/>
            <person name="Zheng X.H."/>
            <person name="Zhong F."/>
            <person name="Delcher A.L."/>
            <person name="Huson D.H."/>
            <person name="Kravitz S.A."/>
            <person name="Mouchard L."/>
            <person name="Reinert K."/>
            <person name="Remington K.A."/>
            <person name="Clark A.G."/>
            <person name="Waterman M.S."/>
            <person name="Eichler E.E."/>
            <person name="Adams M.D."/>
            <person name="Hunkapiller M.W."/>
            <person name="Myers E.W."/>
            <person name="Venter J.C."/>
        </authorList>
    </citation>
    <scope>NUCLEOTIDE SEQUENCE [LARGE SCALE GENOMIC DNA]</scope>
    <scope>VARIANT PRO-161</scope>
</reference>
<reference evidence="10 11" key="6">
    <citation type="journal article" date="2004" name="Genome Res.">
        <title>The status, quality, and expansion of the NIH full-length cDNA project: the Mammalian Gene Collection (MGC).</title>
        <authorList>
            <consortium name="The MGC Project Team"/>
        </authorList>
    </citation>
    <scope>NUCLEOTIDE SEQUENCE [LARGE SCALE MRNA] (ISOFORM 1)</scope>
    <scope>VARIANT PRO-161</scope>
    <source>
        <tissue evidence="12">Lung</tissue>
    </source>
</reference>
<proteinExistence type="evidence at protein level"/>
<organism>
    <name type="scientific">Homo sapiens</name>
    <name type="common">Human</name>
    <dbReference type="NCBI Taxonomy" id="9606"/>
    <lineage>
        <taxon>Eukaryota</taxon>
        <taxon>Metazoa</taxon>
        <taxon>Chordata</taxon>
        <taxon>Craniata</taxon>
        <taxon>Vertebrata</taxon>
        <taxon>Euteleostomi</taxon>
        <taxon>Mammalia</taxon>
        <taxon>Eutheria</taxon>
        <taxon>Euarchontoglires</taxon>
        <taxon>Primates</taxon>
        <taxon>Haplorrhini</taxon>
        <taxon>Catarrhini</taxon>
        <taxon>Hominidae</taxon>
        <taxon>Homo</taxon>
    </lineage>
</organism>
<feature type="chain" id="PRO_0000111102" description="Myozenin-3">
    <location>
        <begin position="1"/>
        <end position="251"/>
    </location>
</feature>
<feature type="region of interest" description="Binding to ACTN2, PPP3CA and TCAP" evidence="4">
    <location>
        <begin position="50"/>
        <end position="67"/>
    </location>
</feature>
<feature type="region of interest" description="Binding to FLNC" evidence="4">
    <location>
        <begin position="67"/>
        <end position="110"/>
    </location>
</feature>
<feature type="region of interest" description="Disordered" evidence="3">
    <location>
        <begin position="79"/>
        <end position="102"/>
    </location>
</feature>
<feature type="region of interest" description="Binding to ACTN2" evidence="4">
    <location>
        <begin position="186"/>
        <end position="207"/>
    </location>
</feature>
<feature type="modified residue" description="Phosphoserine" evidence="2">
    <location>
        <position position="31"/>
    </location>
</feature>
<feature type="splice variant" id="VSP_051876" description="In isoform 3." evidence="9">
    <original>MIPKEQKGPVMAAMGDLTEP</original>
    <variation>MLREVGPGVYGGWGGESPLWPFLA</variation>
    <location>
        <begin position="1"/>
        <end position="20"/>
    </location>
</feature>
<feature type="splice variant" id="VSP_051877" description="In isoform 3." evidence="9">
    <original>MLAGSARRKVT</original>
    <variation>VSKPPLCSWGK</variation>
    <location>
        <begin position="73"/>
        <end position="83"/>
    </location>
</feature>
<feature type="splice variant" id="VSP_051878" description="In isoform 3." evidence="9">
    <location>
        <begin position="84"/>
        <end position="251"/>
    </location>
</feature>
<feature type="splice variant" id="VSP_051879" description="In isoform 2." evidence="9">
    <location>
        <begin position="186"/>
        <end position="231"/>
    </location>
</feature>
<feature type="sequence variant" id="VAR_067718" description="In dbSNP:rs194134." evidence="4 5 6 7 8">
    <original>S</original>
    <variation>P</variation>
    <location>
        <position position="161"/>
    </location>
</feature>
<feature type="sequence variant" id="VAR_056203" description="In dbSNP:rs7737542.">
    <original>T</original>
    <variation>N</variation>
    <location>
        <position position="209"/>
    </location>
</feature>
<evidence type="ECO:0000250" key="1"/>
<evidence type="ECO:0000250" key="2">
    <source>
        <dbReference type="UniProtKB" id="Q8R4E4"/>
    </source>
</evidence>
<evidence type="ECO:0000256" key="3">
    <source>
        <dbReference type="SAM" id="MobiDB-lite"/>
    </source>
</evidence>
<evidence type="ECO:0000269" key="4">
    <source>
    </source>
</evidence>
<evidence type="ECO:0000269" key="5">
    <source>
    </source>
</evidence>
<evidence type="ECO:0000269" key="6">
    <source>
    </source>
</evidence>
<evidence type="ECO:0000269" key="7">
    <source ref="2"/>
</evidence>
<evidence type="ECO:0000269" key="8">
    <source ref="5"/>
</evidence>
<evidence type="ECO:0000303" key="9">
    <source ref="2"/>
</evidence>
<evidence type="ECO:0000305" key="10"/>
<evidence type="ECO:0000312" key="11">
    <source>
        <dbReference type="EMBL" id="AAH69380.1"/>
    </source>
</evidence>
<evidence type="ECO:0000312" key="12">
    <source>
        <dbReference type="EMBL" id="AAH74871.1"/>
    </source>
</evidence>
<evidence type="ECO:0000312" key="13">
    <source>
        <dbReference type="EMBL" id="AAL79336.1"/>
    </source>
</evidence>
<evidence type="ECO:0000312" key="14">
    <source>
        <dbReference type="EMBL" id="CAC83076.1"/>
    </source>
</evidence>
<evidence type="ECO:0000312" key="15">
    <source>
        <dbReference type="HGNC" id="HGNC:18565"/>
    </source>
</evidence>
<name>MYOZ3_HUMAN</name>
<keyword id="KW-0025">Alternative splicing</keyword>
<keyword id="KW-0963">Cytoplasm</keyword>
<keyword id="KW-0597">Phosphoprotein</keyword>
<keyword id="KW-1267">Proteomics identification</keyword>
<keyword id="KW-1185">Reference proteome</keyword>
<gene>
    <name evidence="15" type="primary">MYOZ3</name>
    <name evidence="14" type="synonym">FRP3</name>
</gene>
<accession>Q8TDC0</accession>
<accession>B2R9Q4</accession>
<accession>D3DQG9</accession>
<accession>Q8IVM1</accession>
<accession>Q8IVN1</accession>